<sequence>MAVTKLVLVRHGESQWNKENRFTGWYDVDLSEKGVSEAKAAGKLLKEEGFSFDFAYTSVLKRAIHTLWNVLDELDQAWLPVEKSWKLNERHYGALQGLNKAETAEKYGDEQVKQWRRGFAVTPPELTKDDERYPGHDPRYAKLSEKELPLTESLALTIDRVIPYWNDTILPRMKSGERVIIAAHGNSLRALVKYLDNMSEDEILELNIPTGVPLVYEFDENFKPIKHYYLGNADEIAAKAAAVANQGKAK</sequence>
<proteinExistence type="inferred from homology"/>
<reference key="1">
    <citation type="journal article" date="2001" name="Nature">
        <title>Complete genome sequence of a multiple drug resistant Salmonella enterica serovar Typhi CT18.</title>
        <authorList>
            <person name="Parkhill J."/>
            <person name="Dougan G."/>
            <person name="James K.D."/>
            <person name="Thomson N.R."/>
            <person name="Pickard D."/>
            <person name="Wain J."/>
            <person name="Churcher C.M."/>
            <person name="Mungall K.L."/>
            <person name="Bentley S.D."/>
            <person name="Holden M.T.G."/>
            <person name="Sebaihia M."/>
            <person name="Baker S."/>
            <person name="Basham D."/>
            <person name="Brooks K."/>
            <person name="Chillingworth T."/>
            <person name="Connerton P."/>
            <person name="Cronin A."/>
            <person name="Davis P."/>
            <person name="Davies R.M."/>
            <person name="Dowd L."/>
            <person name="White N."/>
            <person name="Farrar J."/>
            <person name="Feltwell T."/>
            <person name="Hamlin N."/>
            <person name="Haque A."/>
            <person name="Hien T.T."/>
            <person name="Holroyd S."/>
            <person name="Jagels K."/>
            <person name="Krogh A."/>
            <person name="Larsen T.S."/>
            <person name="Leather S."/>
            <person name="Moule S."/>
            <person name="O'Gaora P."/>
            <person name="Parry C."/>
            <person name="Quail M.A."/>
            <person name="Rutherford K.M."/>
            <person name="Simmonds M."/>
            <person name="Skelton J."/>
            <person name="Stevens K."/>
            <person name="Whitehead S."/>
            <person name="Barrell B.G."/>
        </authorList>
    </citation>
    <scope>NUCLEOTIDE SEQUENCE [LARGE SCALE GENOMIC DNA]</scope>
    <source>
        <strain>CT18</strain>
    </source>
</reference>
<reference key="2">
    <citation type="journal article" date="2003" name="J. Bacteriol.">
        <title>Comparative genomics of Salmonella enterica serovar Typhi strains Ty2 and CT18.</title>
        <authorList>
            <person name="Deng W."/>
            <person name="Liou S.-R."/>
            <person name="Plunkett G. III"/>
            <person name="Mayhew G.F."/>
            <person name="Rose D.J."/>
            <person name="Burland V."/>
            <person name="Kodoyianni V."/>
            <person name="Schwartz D.C."/>
            <person name="Blattner F.R."/>
        </authorList>
    </citation>
    <scope>NUCLEOTIDE SEQUENCE [LARGE SCALE GENOMIC DNA]</scope>
    <source>
        <strain>ATCC 700931 / Ty2</strain>
    </source>
</reference>
<organism>
    <name type="scientific">Salmonella typhi</name>
    <dbReference type="NCBI Taxonomy" id="90370"/>
    <lineage>
        <taxon>Bacteria</taxon>
        <taxon>Pseudomonadati</taxon>
        <taxon>Pseudomonadota</taxon>
        <taxon>Gammaproteobacteria</taxon>
        <taxon>Enterobacterales</taxon>
        <taxon>Enterobacteriaceae</taxon>
        <taxon>Salmonella</taxon>
    </lineage>
</organism>
<comment type="function">
    <text evidence="2">Catalyzes the interconversion of 2-phosphoglycerate and 3-phosphoglycerate.</text>
</comment>
<comment type="catalytic activity">
    <reaction evidence="2">
        <text>(2R)-2-phosphoglycerate = (2R)-3-phosphoglycerate</text>
        <dbReference type="Rhea" id="RHEA:15901"/>
        <dbReference type="ChEBI" id="CHEBI:58272"/>
        <dbReference type="ChEBI" id="CHEBI:58289"/>
        <dbReference type="EC" id="5.4.2.11"/>
    </reaction>
</comment>
<comment type="pathway">
    <text evidence="2">Carbohydrate degradation; glycolysis; pyruvate from D-glyceraldehyde 3-phosphate: step 3/5.</text>
</comment>
<comment type="subunit">
    <text evidence="2">Homodimer.</text>
</comment>
<comment type="similarity">
    <text evidence="2">Belongs to the phosphoglycerate mutase family. BPG-dependent PGAM subfamily.</text>
</comment>
<accession>Q8Z8B2</accession>
<name>GPMA_SALTI</name>
<protein>
    <recommendedName>
        <fullName evidence="2">2,3-bisphosphoglycerate-dependent phosphoglycerate mutase</fullName>
        <shortName evidence="2">BPG-dependent PGAM</shortName>
        <shortName evidence="2">PGAM</shortName>
        <shortName evidence="2">Phosphoglyceromutase</shortName>
        <shortName evidence="2">dPGM</shortName>
        <ecNumber evidence="2">5.4.2.11</ecNumber>
    </recommendedName>
</protein>
<dbReference type="EC" id="5.4.2.11" evidence="2"/>
<dbReference type="EMBL" id="AL513382">
    <property type="protein sequence ID" value="CAD05220.1"/>
    <property type="molecule type" value="Genomic_DNA"/>
</dbReference>
<dbReference type="EMBL" id="AE014613">
    <property type="protein sequence ID" value="AAO69732.1"/>
    <property type="molecule type" value="Genomic_DNA"/>
</dbReference>
<dbReference type="RefSeq" id="NP_455314.1">
    <property type="nucleotide sequence ID" value="NC_003198.1"/>
</dbReference>
<dbReference type="RefSeq" id="WP_000301554.1">
    <property type="nucleotide sequence ID" value="NZ_WSUR01000021.1"/>
</dbReference>
<dbReference type="SMR" id="Q8Z8B2"/>
<dbReference type="STRING" id="220341.gene:17584810"/>
<dbReference type="KEGG" id="stt:t2115"/>
<dbReference type="KEGG" id="sty:STY0804"/>
<dbReference type="PATRIC" id="fig|220341.7.peg.809"/>
<dbReference type="eggNOG" id="COG0588">
    <property type="taxonomic scope" value="Bacteria"/>
</dbReference>
<dbReference type="HOGENOM" id="CLU_033323_1_1_6"/>
<dbReference type="OMA" id="MLPYWYD"/>
<dbReference type="OrthoDB" id="9781415at2"/>
<dbReference type="UniPathway" id="UPA00109">
    <property type="reaction ID" value="UER00186"/>
</dbReference>
<dbReference type="Proteomes" id="UP000000541">
    <property type="component" value="Chromosome"/>
</dbReference>
<dbReference type="Proteomes" id="UP000002670">
    <property type="component" value="Chromosome"/>
</dbReference>
<dbReference type="GO" id="GO:0004619">
    <property type="term" value="F:phosphoglycerate mutase activity"/>
    <property type="evidence" value="ECO:0007669"/>
    <property type="project" value="UniProtKB-EC"/>
</dbReference>
<dbReference type="GO" id="GO:0006094">
    <property type="term" value="P:gluconeogenesis"/>
    <property type="evidence" value="ECO:0007669"/>
    <property type="project" value="UniProtKB-UniRule"/>
</dbReference>
<dbReference type="GO" id="GO:0006096">
    <property type="term" value="P:glycolytic process"/>
    <property type="evidence" value="ECO:0007669"/>
    <property type="project" value="UniProtKB-UniRule"/>
</dbReference>
<dbReference type="CDD" id="cd07067">
    <property type="entry name" value="HP_PGM_like"/>
    <property type="match status" value="1"/>
</dbReference>
<dbReference type="FunFam" id="3.40.50.1240:FF:000003">
    <property type="entry name" value="2,3-bisphosphoglycerate-dependent phosphoglycerate mutase"/>
    <property type="match status" value="1"/>
</dbReference>
<dbReference type="Gene3D" id="3.40.50.1240">
    <property type="entry name" value="Phosphoglycerate mutase-like"/>
    <property type="match status" value="1"/>
</dbReference>
<dbReference type="HAMAP" id="MF_01039">
    <property type="entry name" value="PGAM_GpmA"/>
    <property type="match status" value="1"/>
</dbReference>
<dbReference type="InterPro" id="IPR013078">
    <property type="entry name" value="His_Pase_superF_clade-1"/>
</dbReference>
<dbReference type="InterPro" id="IPR029033">
    <property type="entry name" value="His_PPase_superfam"/>
</dbReference>
<dbReference type="InterPro" id="IPR001345">
    <property type="entry name" value="PG/BPGM_mutase_AS"/>
</dbReference>
<dbReference type="InterPro" id="IPR005952">
    <property type="entry name" value="Phosphogly_mut1"/>
</dbReference>
<dbReference type="NCBIfam" id="TIGR01258">
    <property type="entry name" value="pgm_1"/>
    <property type="match status" value="1"/>
</dbReference>
<dbReference type="NCBIfam" id="NF010713">
    <property type="entry name" value="PRK14115.1"/>
    <property type="match status" value="1"/>
</dbReference>
<dbReference type="PANTHER" id="PTHR11931">
    <property type="entry name" value="PHOSPHOGLYCERATE MUTASE"/>
    <property type="match status" value="1"/>
</dbReference>
<dbReference type="Pfam" id="PF00300">
    <property type="entry name" value="His_Phos_1"/>
    <property type="match status" value="1"/>
</dbReference>
<dbReference type="PIRSF" id="PIRSF000709">
    <property type="entry name" value="6PFK_2-Ptase"/>
    <property type="match status" value="1"/>
</dbReference>
<dbReference type="SMART" id="SM00855">
    <property type="entry name" value="PGAM"/>
    <property type="match status" value="1"/>
</dbReference>
<dbReference type="SUPFAM" id="SSF53254">
    <property type="entry name" value="Phosphoglycerate mutase-like"/>
    <property type="match status" value="1"/>
</dbReference>
<dbReference type="PROSITE" id="PS00175">
    <property type="entry name" value="PG_MUTASE"/>
    <property type="match status" value="1"/>
</dbReference>
<gene>
    <name evidence="2" type="primary">gpmA</name>
    <name type="ordered locus">STY0804</name>
    <name type="ordered locus">t2115</name>
</gene>
<keyword id="KW-0312">Gluconeogenesis</keyword>
<keyword id="KW-0324">Glycolysis</keyword>
<keyword id="KW-0413">Isomerase</keyword>
<feature type="initiator methionine" description="Removed" evidence="1">
    <location>
        <position position="1"/>
    </location>
</feature>
<feature type="chain" id="PRO_0000179907" description="2,3-bisphosphoglycerate-dependent phosphoglycerate mutase">
    <location>
        <begin position="2"/>
        <end position="250"/>
    </location>
</feature>
<feature type="active site" description="Tele-phosphohistidine intermediate" evidence="2">
    <location>
        <position position="11"/>
    </location>
</feature>
<feature type="active site" description="Proton donor/acceptor" evidence="2">
    <location>
        <position position="89"/>
    </location>
</feature>
<feature type="binding site" evidence="2">
    <location>
        <begin position="10"/>
        <end position="17"/>
    </location>
    <ligand>
        <name>substrate</name>
    </ligand>
</feature>
<feature type="binding site" evidence="2">
    <location>
        <begin position="23"/>
        <end position="24"/>
    </location>
    <ligand>
        <name>substrate</name>
    </ligand>
</feature>
<feature type="binding site" evidence="2">
    <location>
        <position position="62"/>
    </location>
    <ligand>
        <name>substrate</name>
    </ligand>
</feature>
<feature type="binding site" evidence="2">
    <location>
        <begin position="89"/>
        <end position="92"/>
    </location>
    <ligand>
        <name>substrate</name>
    </ligand>
</feature>
<feature type="binding site" evidence="2">
    <location>
        <position position="100"/>
    </location>
    <ligand>
        <name>substrate</name>
    </ligand>
</feature>
<feature type="binding site" evidence="2">
    <location>
        <begin position="116"/>
        <end position="117"/>
    </location>
    <ligand>
        <name>substrate</name>
    </ligand>
</feature>
<feature type="binding site" evidence="2">
    <location>
        <begin position="185"/>
        <end position="186"/>
    </location>
    <ligand>
        <name>substrate</name>
    </ligand>
</feature>
<feature type="site" description="Transition state stabilizer" evidence="2">
    <location>
        <position position="184"/>
    </location>
</feature>
<evidence type="ECO:0000250" key="1"/>
<evidence type="ECO:0000255" key="2">
    <source>
        <dbReference type="HAMAP-Rule" id="MF_01039"/>
    </source>
</evidence>